<evidence type="ECO:0000255" key="1">
    <source>
        <dbReference type="HAMAP-Rule" id="MF_04064"/>
    </source>
</evidence>
<evidence type="ECO:0000256" key="2">
    <source>
        <dbReference type="SAM" id="MobiDB-lite"/>
    </source>
</evidence>
<dbReference type="EMBL" id="CY002502">
    <property type="protein sequence ID" value="AAZ80016.1"/>
    <property type="molecule type" value="Genomic_RNA"/>
</dbReference>
<dbReference type="SMR" id="Q3YPY6"/>
<dbReference type="Proteomes" id="UP000154307">
    <property type="component" value="Genome"/>
</dbReference>
<dbReference type="GO" id="GO:0044164">
    <property type="term" value="C:host cell cytosol"/>
    <property type="evidence" value="ECO:0007669"/>
    <property type="project" value="UniProtKB-SubCell"/>
</dbReference>
<dbReference type="GO" id="GO:0044192">
    <property type="term" value="C:host cell mitochondrial inner membrane"/>
    <property type="evidence" value="ECO:0007669"/>
    <property type="project" value="UniProtKB-SubCell"/>
</dbReference>
<dbReference type="GO" id="GO:0042025">
    <property type="term" value="C:host cell nucleus"/>
    <property type="evidence" value="ECO:0007669"/>
    <property type="project" value="UniProtKB-SubCell"/>
</dbReference>
<dbReference type="GO" id="GO:0016020">
    <property type="term" value="C:membrane"/>
    <property type="evidence" value="ECO:0007669"/>
    <property type="project" value="UniProtKB-UniRule"/>
</dbReference>
<dbReference type="GO" id="GO:0052150">
    <property type="term" value="P:symbiont-mediated perturbation of host apoptosis"/>
    <property type="evidence" value="ECO:0007669"/>
    <property type="project" value="UniProtKB-KW"/>
</dbReference>
<dbReference type="GO" id="GO:0039545">
    <property type="term" value="P:symbiont-mediated suppression of host cytoplasmic pattern recognition receptor signaling pathway via inhibition of MAVS activity"/>
    <property type="evidence" value="ECO:0007669"/>
    <property type="project" value="UniProtKB-KW"/>
</dbReference>
<dbReference type="HAMAP" id="MF_04064">
    <property type="entry name" value="INFV_PB1F2"/>
    <property type="match status" value="1"/>
</dbReference>
<dbReference type="InterPro" id="IPR021045">
    <property type="entry name" value="Flu_proapoptotic_PB1-F2"/>
</dbReference>
<dbReference type="Pfam" id="PF11986">
    <property type="entry name" value="PB1-F2"/>
    <property type="match status" value="1"/>
</dbReference>
<reference key="1">
    <citation type="submission" date="2005-08" db="EMBL/GenBank/DDBJ databases">
        <title>The NIAID influenza genome sequencing project.</title>
        <authorList>
            <person name="Ghedin E."/>
            <person name="Spiro D."/>
            <person name="Miller N."/>
            <person name="Zaborsky J."/>
            <person name="Feldblyum T."/>
            <person name="Subbu V."/>
            <person name="Shumway M."/>
            <person name="Sparenborg J."/>
            <person name="Groveman L."/>
            <person name="Halpin R."/>
            <person name="Sitz J."/>
            <person name="Koo H."/>
            <person name="Salzberg S.L."/>
            <person name="Webster R.G."/>
            <person name="Hoffmann E."/>
            <person name="Krauss S."/>
            <person name="Naeve C."/>
            <person name="Bao Y."/>
            <person name="Bolotov P."/>
            <person name="Dernovoy D."/>
            <person name="Kiryutin B."/>
            <person name="Lipman D.J."/>
            <person name="Tatusova T."/>
        </authorList>
    </citation>
    <scope>NUCLEOTIDE SEQUENCE [GENOMIC RNA]</scope>
</reference>
<keyword id="KW-0053">Apoptosis</keyword>
<keyword id="KW-1035">Host cytoplasm</keyword>
<keyword id="KW-1043">Host membrane</keyword>
<keyword id="KW-1045">Host mitochondrion</keyword>
<keyword id="KW-1046">Host mitochondrion inner membrane</keyword>
<keyword id="KW-1048">Host nucleus</keyword>
<keyword id="KW-0945">Host-virus interaction</keyword>
<keyword id="KW-1090">Inhibition of host innate immune response by virus</keyword>
<keyword id="KW-1097">Inhibition of host MAVS by virus</keyword>
<keyword id="KW-1113">Inhibition of host RLR pathway by virus</keyword>
<keyword id="KW-0472">Membrane</keyword>
<keyword id="KW-1119">Modulation of host cell apoptosis by virus</keyword>
<keyword id="KW-0899">Viral immunoevasion</keyword>
<accession>Q3YPY6</accession>
<sequence length="90" mass="10736">MEQEQDTPWTQSTEHINIQKKGSGQQTRRLGRPNLTQLMDHYLRIMSQVDMHKQTVSWKQWLSLKNPTQGSLKTRALKQWKLFNKQGWTD</sequence>
<organism>
    <name type="scientific">Influenza A virus (strain A/Memphis/1/1971 H3N2)</name>
    <dbReference type="NCBI Taxonomy" id="383586"/>
    <lineage>
        <taxon>Viruses</taxon>
        <taxon>Riboviria</taxon>
        <taxon>Orthornavirae</taxon>
        <taxon>Negarnaviricota</taxon>
        <taxon>Polyploviricotina</taxon>
        <taxon>Insthoviricetes</taxon>
        <taxon>Articulavirales</taxon>
        <taxon>Orthomyxoviridae</taxon>
        <taxon>Alphainfluenzavirus</taxon>
        <taxon>Alphainfluenzavirus influenzae</taxon>
        <taxon>Influenza A virus</taxon>
    </lineage>
</organism>
<proteinExistence type="inferred from homology"/>
<protein>
    <recommendedName>
        <fullName evidence="1">Protein PB1-F2</fullName>
    </recommendedName>
</protein>
<feature type="chain" id="PRO_0000278719" description="Protein PB1-F2">
    <location>
        <begin position="1"/>
        <end position="90"/>
    </location>
</feature>
<feature type="region of interest" description="Disordered" evidence="2">
    <location>
        <begin position="1"/>
        <end position="30"/>
    </location>
</feature>
<feature type="region of interest" description="Mitochondrial targeting sequence" evidence="1">
    <location>
        <begin position="65"/>
        <end position="87"/>
    </location>
</feature>
<feature type="compositionally biased region" description="Polar residues" evidence="2">
    <location>
        <begin position="1"/>
        <end position="28"/>
    </location>
</feature>
<feature type="site" description="Low pathogenicity" evidence="1">
    <location>
        <position position="66"/>
    </location>
</feature>
<organismHost>
    <name type="scientific">Aves</name>
    <dbReference type="NCBI Taxonomy" id="8782"/>
</organismHost>
<organismHost>
    <name type="scientific">Cetacea</name>
    <name type="common">whales</name>
    <dbReference type="NCBI Taxonomy" id="9721"/>
</organismHost>
<organismHost>
    <name type="scientific">Homo sapiens</name>
    <name type="common">Human</name>
    <dbReference type="NCBI Taxonomy" id="9606"/>
</organismHost>
<organismHost>
    <name type="scientific">Phocidae</name>
    <name type="common">true seals</name>
    <dbReference type="NCBI Taxonomy" id="9709"/>
</organismHost>
<organismHost>
    <name type="scientific">Sus scrofa</name>
    <name type="common">Pig</name>
    <dbReference type="NCBI Taxonomy" id="9823"/>
</organismHost>
<comment type="function">
    <text evidence="1">Plays an important role in promoting lung pathology in both primary viral infection and secondary bacterial infection. Promotes alteration of mitochondrial morphology, dissipation of mitochondrial membrane potential, and cell death. Alternatively, inhibits the production of interferon in the infected cell at the level of host mitochondrial antiviral signaling MAVS. Its level of expression differs greatly depending on which cell type is infected, in a manner that is independent of the levels of expression of other viral proteins. Monocytic cells are more affected than epithelial cells. Seems to disable virus-infected monocytes or other host innate immune cells. During early stage of infection, predisposes the mitochondria to permeability transition through interaction with host SLC25A6/ANT3 and VDAC1. These proteins participate in the formation of the permeability transition pore complex (PTPC) responsible of the release of mitochondrial products that triggers apoptosis.</text>
</comment>
<comment type="subunit">
    <text evidence="1">Oligomer. Interacts with human SLC25A6/ANT3 and VDAC1. Interacts with host MAVS.</text>
</comment>
<comment type="subcellular location">
    <subcellularLocation>
        <location evidence="1">Host mitochondrion inner membrane</location>
    </subcellularLocation>
    <subcellularLocation>
        <location evidence="1">Host nucleus</location>
    </subcellularLocation>
    <subcellularLocation>
        <location evidence="1">Host cytoplasm</location>
        <location evidence="1">Host cytosol</location>
    </subcellularLocation>
    <text evidence="1">Inner mitochondrial membrane in most cells types. Otherwise is detected in the nucleus and cytosol.</text>
</comment>
<comment type="miscellaneous">
    <text>Is not encoded in all strains, and seems to be dispensable for replication.</text>
</comment>
<comment type="similarity">
    <text evidence="1">Belongs to the influenza viruses PB1-F2 family.</text>
</comment>
<gene>
    <name evidence="1" type="primary">PB1</name>
</gene>
<name>PB1F2_I71A1</name>